<dbReference type="EC" id="3.4.24.-"/>
<dbReference type="EMBL" id="M31884">
    <property type="protein sequence ID" value="AAA25301.1"/>
    <property type="molecule type" value="Genomic_DNA"/>
</dbReference>
<dbReference type="PIR" id="A35265">
    <property type="entry name" value="A35265"/>
</dbReference>
<dbReference type="PDB" id="6YA1">
    <property type="method" value="X-ray"/>
    <property type="resolution" value="1.48 A"/>
    <property type="chains" value="A=208-543"/>
</dbReference>
<dbReference type="PDB" id="6YZE">
    <property type="method" value="X-ray"/>
    <property type="resolution" value="2.18 A"/>
    <property type="chains" value="A=208-543"/>
</dbReference>
<dbReference type="PDBsum" id="6YA1"/>
<dbReference type="PDBsum" id="6YZE"/>
<dbReference type="SMR" id="P21347"/>
<dbReference type="STRING" id="91892.BIZ52_02605"/>
<dbReference type="MEROPS" id="M04.006"/>
<dbReference type="eggNOG" id="COG3227">
    <property type="taxonomic scope" value="Bacteria"/>
</dbReference>
<dbReference type="GO" id="GO:0005576">
    <property type="term" value="C:extracellular region"/>
    <property type="evidence" value="ECO:0007669"/>
    <property type="project" value="UniProtKB-SubCell"/>
</dbReference>
<dbReference type="GO" id="GO:0046872">
    <property type="term" value="F:metal ion binding"/>
    <property type="evidence" value="ECO:0007669"/>
    <property type="project" value="UniProtKB-KW"/>
</dbReference>
<dbReference type="GO" id="GO:0004222">
    <property type="term" value="F:metalloendopeptidase activity"/>
    <property type="evidence" value="ECO:0007669"/>
    <property type="project" value="InterPro"/>
</dbReference>
<dbReference type="GO" id="GO:0006508">
    <property type="term" value="P:proteolysis"/>
    <property type="evidence" value="ECO:0007669"/>
    <property type="project" value="UniProtKB-KW"/>
</dbReference>
<dbReference type="CDD" id="cd09597">
    <property type="entry name" value="M4_TLP"/>
    <property type="match status" value="1"/>
</dbReference>
<dbReference type="Gene3D" id="3.10.170.10">
    <property type="match status" value="1"/>
</dbReference>
<dbReference type="Gene3D" id="3.10.450.40">
    <property type="match status" value="1"/>
</dbReference>
<dbReference type="Gene3D" id="3.10.450.490">
    <property type="match status" value="1"/>
</dbReference>
<dbReference type="Gene3D" id="1.10.390.10">
    <property type="entry name" value="Neutral Protease Domain 2"/>
    <property type="match status" value="1"/>
</dbReference>
<dbReference type="InterPro" id="IPR011096">
    <property type="entry name" value="FTP_domain"/>
</dbReference>
<dbReference type="InterPro" id="IPR023612">
    <property type="entry name" value="Peptidase_M4"/>
</dbReference>
<dbReference type="InterPro" id="IPR027268">
    <property type="entry name" value="Peptidase_M4/M1_CTD_sf"/>
</dbReference>
<dbReference type="InterPro" id="IPR001570">
    <property type="entry name" value="Peptidase_M4_C_domain"/>
</dbReference>
<dbReference type="InterPro" id="IPR013856">
    <property type="entry name" value="Peptidase_M4_domain"/>
</dbReference>
<dbReference type="InterPro" id="IPR050728">
    <property type="entry name" value="Zinc_Metalloprotease_M4"/>
</dbReference>
<dbReference type="NCBIfam" id="NF045902">
    <property type="entry name" value="MetaloprotProALeg"/>
    <property type="match status" value="1"/>
</dbReference>
<dbReference type="PANTHER" id="PTHR33794">
    <property type="entry name" value="BACILLOLYSIN"/>
    <property type="match status" value="1"/>
</dbReference>
<dbReference type="PANTHER" id="PTHR33794:SF1">
    <property type="entry name" value="BACILLOLYSIN"/>
    <property type="match status" value="1"/>
</dbReference>
<dbReference type="Pfam" id="PF07504">
    <property type="entry name" value="FTP"/>
    <property type="match status" value="1"/>
</dbReference>
<dbReference type="Pfam" id="PF01447">
    <property type="entry name" value="Peptidase_M4"/>
    <property type="match status" value="1"/>
</dbReference>
<dbReference type="Pfam" id="PF02868">
    <property type="entry name" value="Peptidase_M4_C"/>
    <property type="match status" value="1"/>
</dbReference>
<dbReference type="PRINTS" id="PR00730">
    <property type="entry name" value="THERMOLYSIN"/>
</dbReference>
<dbReference type="SUPFAM" id="SSF55486">
    <property type="entry name" value="Metalloproteases ('zincins'), catalytic domain"/>
    <property type="match status" value="1"/>
</dbReference>
<dbReference type="PROSITE" id="PS00142">
    <property type="entry name" value="ZINC_PROTEASE"/>
    <property type="match status" value="1"/>
</dbReference>
<keyword id="KW-0002">3D-structure</keyword>
<keyword id="KW-0903">Direct protein sequencing</keyword>
<keyword id="KW-0378">Hydrolase</keyword>
<keyword id="KW-0479">Metal-binding</keyword>
<keyword id="KW-0482">Metalloprotease</keyword>
<keyword id="KW-0645">Protease</keyword>
<keyword id="KW-0964">Secreted</keyword>
<keyword id="KW-0732">Signal</keyword>
<keyword id="KW-0862">Zinc</keyword>
<keyword id="KW-0865">Zymogen</keyword>
<feature type="signal peptide" evidence="2">
    <location>
        <begin position="1"/>
        <end position="24"/>
    </location>
</feature>
<feature type="propeptide" id="PRO_0000028638" evidence="4">
    <location>
        <begin position="25"/>
        <end position="207"/>
    </location>
</feature>
<feature type="chain" id="PRO_0000028639" description="Zinc metalloproteinase">
    <location>
        <begin position="208"/>
        <end position="543"/>
    </location>
</feature>
<feature type="active site" evidence="3">
    <location>
        <position position="378"/>
    </location>
</feature>
<feature type="active site" description="Proton donor" evidence="3">
    <location>
        <position position="463"/>
    </location>
</feature>
<feature type="binding site" evidence="3">
    <location>
        <position position="377"/>
    </location>
    <ligand>
        <name>Zn(2+)</name>
        <dbReference type="ChEBI" id="CHEBI:29105"/>
        <note>catalytic</note>
    </ligand>
</feature>
<feature type="binding site" evidence="3">
    <location>
        <position position="381"/>
    </location>
    <ligand>
        <name>Zn(2+)</name>
        <dbReference type="ChEBI" id="CHEBI:29105"/>
        <note>catalytic</note>
    </ligand>
</feature>
<feature type="binding site" evidence="3">
    <location>
        <position position="401"/>
    </location>
    <ligand>
        <name>Zn(2+)</name>
        <dbReference type="ChEBI" id="CHEBI:29105"/>
        <note>catalytic</note>
    </ligand>
</feature>
<feature type="strand" evidence="6">
    <location>
        <begin position="209"/>
        <end position="220"/>
    </location>
</feature>
<feature type="turn" evidence="6">
    <location>
        <begin position="221"/>
        <end position="223"/>
    </location>
</feature>
<feature type="strand" evidence="6">
    <location>
        <begin position="224"/>
        <end position="228"/>
    </location>
</feature>
<feature type="turn" evidence="7">
    <location>
        <begin position="229"/>
        <end position="231"/>
    </location>
</feature>
<feature type="strand" evidence="6">
    <location>
        <begin position="235"/>
        <end position="240"/>
    </location>
</feature>
<feature type="helix" evidence="6">
    <location>
        <begin position="241"/>
        <end position="243"/>
    </location>
</feature>
<feature type="strand" evidence="6">
    <location>
        <begin position="245"/>
        <end position="249"/>
    </location>
</feature>
<feature type="strand" evidence="6">
    <location>
        <begin position="251"/>
        <end position="257"/>
    </location>
</feature>
<feature type="strand" evidence="6">
    <location>
        <begin position="270"/>
        <end position="272"/>
    </location>
</feature>
<feature type="strand" evidence="7">
    <location>
        <begin position="284"/>
        <end position="286"/>
    </location>
</feature>
<feature type="turn" evidence="6">
    <location>
        <begin position="288"/>
        <end position="291"/>
    </location>
</feature>
<feature type="helix" evidence="6">
    <location>
        <begin position="303"/>
        <end position="322"/>
    </location>
</feature>
<feature type="strand" evidence="6">
    <location>
        <begin position="326"/>
        <end position="328"/>
    </location>
</feature>
<feature type="strand" evidence="6">
    <location>
        <begin position="332"/>
        <end position="334"/>
    </location>
</feature>
<feature type="strand" evidence="6">
    <location>
        <begin position="337"/>
        <end position="346"/>
    </location>
</feature>
<feature type="strand" evidence="6">
    <location>
        <begin position="350"/>
        <end position="352"/>
    </location>
</feature>
<feature type="strand" evidence="6">
    <location>
        <begin position="357"/>
        <end position="360"/>
    </location>
</feature>
<feature type="strand" evidence="6">
    <location>
        <begin position="364"/>
        <end position="367"/>
    </location>
</feature>
<feature type="helix" evidence="6">
    <location>
        <begin position="372"/>
        <end position="385"/>
    </location>
</feature>
<feature type="turn" evidence="6">
    <location>
        <begin position="386"/>
        <end position="388"/>
    </location>
</feature>
<feature type="helix" evidence="6">
    <location>
        <begin position="394"/>
        <end position="416"/>
    </location>
</feature>
<feature type="strand" evidence="6">
    <location>
        <begin position="421"/>
        <end position="424"/>
    </location>
</feature>
<feature type="turn" evidence="6">
    <location>
        <begin position="425"/>
        <end position="427"/>
    </location>
</feature>
<feature type="helix" evidence="6">
    <location>
        <begin position="430"/>
        <end position="432"/>
    </location>
</feature>
<feature type="strand" evidence="6">
    <location>
        <begin position="437"/>
        <end position="442"/>
    </location>
</feature>
<feature type="helix" evidence="6">
    <location>
        <begin position="443"/>
        <end position="446"/>
    </location>
</feature>
<feature type="helix" evidence="6">
    <location>
        <begin position="453"/>
        <end position="455"/>
    </location>
</feature>
<feature type="helix" evidence="6">
    <location>
        <begin position="462"/>
        <end position="465"/>
    </location>
</feature>
<feature type="helix" evidence="6">
    <location>
        <begin position="467"/>
        <end position="477"/>
    </location>
</feature>
<feature type="helix" evidence="6">
    <location>
        <begin position="484"/>
        <end position="497"/>
    </location>
</feature>
<feature type="helix" evidence="6">
    <location>
        <begin position="505"/>
        <end position="519"/>
    </location>
</feature>
<feature type="helix" evidence="6">
    <location>
        <begin position="523"/>
        <end position="532"/>
    </location>
</feature>
<feature type="helix" evidence="6">
    <location>
        <begin position="537"/>
        <end position="539"/>
    </location>
</feature>
<organism>
    <name type="scientific">Legionella pneumophila</name>
    <dbReference type="NCBI Taxonomy" id="446"/>
    <lineage>
        <taxon>Bacteria</taxon>
        <taxon>Pseudomonadati</taxon>
        <taxon>Pseudomonadota</taxon>
        <taxon>Gammaproteobacteria</taxon>
        <taxon>Legionellales</taxon>
        <taxon>Legionellaceae</taxon>
        <taxon>Legionella</taxon>
    </lineage>
</organism>
<protein>
    <recommendedName>
        <fullName>Zinc metalloproteinase</fullName>
        <ecNumber>3.4.24.-</ecNumber>
    </recommendedName>
    <alternativeName>
        <fullName>PEP1</fullName>
    </alternativeName>
    <alternativeName>
        <fullName>PRO A</fullName>
    </alternativeName>
</protein>
<accession>P21347</accession>
<sequence length="543" mass="60704">MHPNYYLSPLAVAIALGIASPVKAADPIPLQKSSFSEVTQKFQLTLPGVMKGAVVSTNSLQFIRQHTDGNKVTHVRMQQQYAGFPVFGGYAILHSKNATPSLATAKSDEKMNGVIYDGLQAELGQPKPSFVKNASMALQQFKDKYANKQVSEDQVTPMIYIDEKHQAHWAYKVSVLVIHDDRIPERPTAIIDAETNKPFVQWDDVKTEKVQAKGMGFGGNRKIGEYQFGKDLPLLEITRDSSVEMCFMENTDVKVVDMGHKYYSNNKPMQFTCKETPDTQSTKTYYTGYSADGYDRDNGAASPTNDALYAGYVIKHMYHDWYGVEALTKSDGSPMQLVMRVHYGQGYENAYWDGKQMTFGDGDTMMYPLVSLGVGGHEVSHGFTEQHSGLEYFGQSGGMNESFSDMAAQAAEYYSVGKNSWQIGPEIMKEDSGYDALRYMDKPSRDGMSIDVADDYYGGLDVHYSSGVYNHLFYILANQPNWNLRMAFDVMVKANMDYWTPYSTFDEGGCGMLSAAKDLGYNLDDIKKSLSEVTINYQSCYVD</sequence>
<name>PROA_LEGPN</name>
<comment type="function">
    <text>Cleaves collagen, gelatin, casein, alpha-1-antitrypsin, and bovine insulin. May play a role in the pathogenesis of legionnaires disease.</text>
</comment>
<comment type="cofactor">
    <cofactor evidence="1">
        <name>Zn(2+)</name>
        <dbReference type="ChEBI" id="CHEBI:29105"/>
    </cofactor>
    <text evidence="1">Binds 1 zinc ion.</text>
</comment>
<comment type="subcellular location">
    <subcellularLocation>
        <location>Secreted</location>
    </subcellularLocation>
</comment>
<comment type="similarity">
    <text evidence="5">Belongs to the peptidase M4 family.</text>
</comment>
<evidence type="ECO:0000250" key="1"/>
<evidence type="ECO:0000255" key="2"/>
<evidence type="ECO:0000255" key="3">
    <source>
        <dbReference type="PROSITE-ProRule" id="PRU10095"/>
    </source>
</evidence>
<evidence type="ECO:0000269" key="4">
    <source>
    </source>
</evidence>
<evidence type="ECO:0000305" key="5"/>
<evidence type="ECO:0007829" key="6">
    <source>
        <dbReference type="PDB" id="6YA1"/>
    </source>
</evidence>
<evidence type="ECO:0007829" key="7">
    <source>
        <dbReference type="PDB" id="6YZE"/>
    </source>
</evidence>
<reference key="1">
    <citation type="journal article" date="1990" name="J. Bacteriol.">
        <title>Legionella pneumophila zinc metalloprotease is structurally and functionally homologous to Pseudomonas aeruginosa elastase.</title>
        <authorList>
            <person name="Black W.J."/>
            <person name="Quinn F.D."/>
            <person name="Tompkins L.S."/>
        </authorList>
    </citation>
    <scope>NUCLEOTIDE SEQUENCE [GENOMIC DNA]</scope>
    <scope>PROTEIN SEQUENCE OF 208-217</scope>
</reference>
<proteinExistence type="evidence at protein level"/>